<accession>Q9PT40</accession>
<evidence type="ECO:0000250" key="1"/>
<evidence type="ECO:0000255" key="2"/>
<evidence type="ECO:0000255" key="3">
    <source>
        <dbReference type="PROSITE-ProRule" id="PRU00274"/>
    </source>
</evidence>
<evidence type="ECO:0000305" key="4"/>
<evidence type="ECO:0000305" key="5">
    <source>
    </source>
</evidence>
<keyword id="KW-1015">Disulfide bond</keyword>
<keyword id="KW-0325">Glycoprotein</keyword>
<keyword id="KW-1199">Hemostasis impairing toxin</keyword>
<keyword id="KW-0964">Secreted</keyword>
<keyword id="KW-0721">Serine protease homolog</keyword>
<keyword id="KW-0732">Signal</keyword>
<keyword id="KW-0800">Toxin</keyword>
<sequence>MVLIRVLANLLVLQLSYAQKSSELVIGGDECNINEHPFPVALHTARSKRFYCAGTLINQEWVLTAARCDRKNIRIILGVHSKNVPNEDQQIRVPKEKFFCLSSKTYTRWDKDIMLIRLKKPVNDSTHIVPLSLPSSPPSVGSVCRIMGWGTITTTKVTYPDVPHCANINMFDYSVCRKVYRKLPEKSRTLCAGILQGGIDSCKVDNGGPLICNGQIQGIVSWGGHPCAQPHKPALYTNVFDYTDWIQSIIAGNITATCPP</sequence>
<organism>
    <name type="scientific">Macrovipera lebetinus</name>
    <name type="common">Levantine viper</name>
    <name type="synonym">Vipera lebetina</name>
    <dbReference type="NCBI Taxonomy" id="3148341"/>
    <lineage>
        <taxon>Eukaryota</taxon>
        <taxon>Metazoa</taxon>
        <taxon>Chordata</taxon>
        <taxon>Craniata</taxon>
        <taxon>Vertebrata</taxon>
        <taxon>Euteleostomi</taxon>
        <taxon>Lepidosauria</taxon>
        <taxon>Squamata</taxon>
        <taxon>Bifurcata</taxon>
        <taxon>Unidentata</taxon>
        <taxon>Episquamata</taxon>
        <taxon>Toxicofera</taxon>
        <taxon>Serpentes</taxon>
        <taxon>Colubroidea</taxon>
        <taxon>Viperidae</taxon>
        <taxon>Viperinae</taxon>
        <taxon>Macrovipera</taxon>
    </lineage>
</organism>
<reference key="1">
    <citation type="journal article" date="2001" name="Gene">
        <title>Sequence diversity of Vipera lebetina snake venom gland serine proteinase homologs -- result of alternative-splicing or genome alteration.</title>
        <authorList>
            <person name="Siigur E."/>
            <person name="Aaspollu A."/>
            <person name="Siigur J."/>
        </authorList>
    </citation>
    <scope>NUCLEOTIDE SEQUENCE [MRNA]</scope>
    <source>
        <tissue>Venom gland</tissue>
    </source>
</reference>
<name>VSPH2_MACLB</name>
<protein>
    <recommendedName>
        <fullName>Snake venom serine protease homolog 2</fullName>
    </recommendedName>
    <alternativeName>
        <fullName>Venom serine proteinase-like protein 2</fullName>
        <shortName>VLP2</shortName>
    </alternativeName>
</protein>
<comment type="function">
    <text evidence="4">Snake venom serine protease homolog that may act in the hemostasis system of the prey.</text>
</comment>
<comment type="subcellular location">
    <subcellularLocation>
        <location evidence="5">Secreted</location>
    </subcellularLocation>
</comment>
<comment type="tissue specificity">
    <text evidence="5">Expressed by the venom gland.</text>
</comment>
<comment type="similarity">
    <text evidence="4">Belongs to the peptidase S1 family. Snake venom subfamily.</text>
</comment>
<dbReference type="EMBL" id="AJ251153">
    <property type="protein sequence ID" value="CAB62591.1"/>
    <property type="molecule type" value="mRNA"/>
</dbReference>
<dbReference type="SMR" id="Q9PT40"/>
<dbReference type="MEROPS" id="S01.509"/>
<dbReference type="GO" id="GO:0005576">
    <property type="term" value="C:extracellular region"/>
    <property type="evidence" value="ECO:0007669"/>
    <property type="project" value="UniProtKB-SubCell"/>
</dbReference>
<dbReference type="GO" id="GO:0030141">
    <property type="term" value="C:secretory granule"/>
    <property type="evidence" value="ECO:0007669"/>
    <property type="project" value="TreeGrafter"/>
</dbReference>
<dbReference type="GO" id="GO:0004252">
    <property type="term" value="F:serine-type endopeptidase activity"/>
    <property type="evidence" value="ECO:0007669"/>
    <property type="project" value="InterPro"/>
</dbReference>
<dbReference type="GO" id="GO:0090729">
    <property type="term" value="F:toxin activity"/>
    <property type="evidence" value="ECO:0007669"/>
    <property type="project" value="UniProtKB-KW"/>
</dbReference>
<dbReference type="GO" id="GO:0006508">
    <property type="term" value="P:proteolysis"/>
    <property type="evidence" value="ECO:0007669"/>
    <property type="project" value="InterPro"/>
</dbReference>
<dbReference type="CDD" id="cd00190">
    <property type="entry name" value="Tryp_SPc"/>
    <property type="match status" value="1"/>
</dbReference>
<dbReference type="FunFam" id="2.40.10.10:FF:000158">
    <property type="entry name" value="Thrombin-like enzyme saxthrombin"/>
    <property type="match status" value="1"/>
</dbReference>
<dbReference type="FunFam" id="2.40.10.10:FF:000153">
    <property type="entry name" value="Venom plasminogen activator TSV-PA"/>
    <property type="match status" value="1"/>
</dbReference>
<dbReference type="Gene3D" id="2.40.10.10">
    <property type="entry name" value="Trypsin-like serine proteases"/>
    <property type="match status" value="2"/>
</dbReference>
<dbReference type="InterPro" id="IPR009003">
    <property type="entry name" value="Peptidase_S1_PA"/>
</dbReference>
<dbReference type="InterPro" id="IPR043504">
    <property type="entry name" value="Peptidase_S1_PA_chymotrypsin"/>
</dbReference>
<dbReference type="InterPro" id="IPR001314">
    <property type="entry name" value="Peptidase_S1A"/>
</dbReference>
<dbReference type="InterPro" id="IPR001254">
    <property type="entry name" value="Trypsin_dom"/>
</dbReference>
<dbReference type="PANTHER" id="PTHR24271:SF47">
    <property type="entry name" value="KALLIKREIN-1"/>
    <property type="match status" value="1"/>
</dbReference>
<dbReference type="PANTHER" id="PTHR24271">
    <property type="entry name" value="KALLIKREIN-RELATED"/>
    <property type="match status" value="1"/>
</dbReference>
<dbReference type="Pfam" id="PF00089">
    <property type="entry name" value="Trypsin"/>
    <property type="match status" value="1"/>
</dbReference>
<dbReference type="PRINTS" id="PR00722">
    <property type="entry name" value="CHYMOTRYPSIN"/>
</dbReference>
<dbReference type="SMART" id="SM00020">
    <property type="entry name" value="Tryp_SPc"/>
    <property type="match status" value="1"/>
</dbReference>
<dbReference type="SUPFAM" id="SSF50494">
    <property type="entry name" value="Trypsin-like serine proteases"/>
    <property type="match status" value="1"/>
</dbReference>
<dbReference type="PROSITE" id="PS50240">
    <property type="entry name" value="TRYPSIN_DOM"/>
    <property type="match status" value="1"/>
</dbReference>
<feature type="signal peptide" evidence="1">
    <location>
        <begin position="1"/>
        <end position="18"/>
    </location>
</feature>
<feature type="propeptide" id="PRO_0000028425" evidence="1">
    <location>
        <begin position="19"/>
        <end position="24"/>
    </location>
</feature>
<feature type="chain" id="PRO_0000028426" description="Snake venom serine protease homolog 2">
    <location>
        <begin position="25"/>
        <end position="260"/>
    </location>
</feature>
<feature type="domain" description="Peptidase S1" evidence="3">
    <location>
        <begin position="25"/>
        <end position="251"/>
    </location>
</feature>
<feature type="glycosylation site" description="N-linked (GlcNAc...) asparagine" evidence="2">
    <location>
        <position position="123"/>
    </location>
</feature>
<feature type="glycosylation site" description="N-linked (GlcNAc...) asparagine" evidence="2">
    <location>
        <position position="253"/>
    </location>
</feature>
<feature type="disulfide bond" evidence="3">
    <location>
        <begin position="31"/>
        <end position="165"/>
    </location>
</feature>
<feature type="disulfide bond" evidence="3">
    <location>
        <begin position="52"/>
        <end position="68"/>
    </location>
</feature>
<feature type="disulfide bond" evidence="3">
    <location>
        <begin position="100"/>
        <end position="258"/>
    </location>
</feature>
<feature type="disulfide bond" evidence="3">
    <location>
        <begin position="144"/>
        <end position="212"/>
    </location>
</feature>
<feature type="disulfide bond" evidence="3">
    <location>
        <begin position="176"/>
        <end position="191"/>
    </location>
</feature>
<feature type="disulfide bond" evidence="3">
    <location>
        <begin position="202"/>
        <end position="227"/>
    </location>
</feature>
<proteinExistence type="evidence at transcript level"/>